<evidence type="ECO:0000255" key="1">
    <source>
        <dbReference type="HAMAP-Rule" id="MF_00227"/>
    </source>
</evidence>
<evidence type="ECO:0000305" key="2"/>
<feature type="chain" id="PRO_0000198531" description="Ribonuclease P protein component">
    <location>
        <begin position="1"/>
        <end position="117"/>
    </location>
</feature>
<keyword id="KW-0255">Endonuclease</keyword>
<keyword id="KW-0378">Hydrolase</keyword>
<keyword id="KW-0540">Nuclease</keyword>
<keyword id="KW-0694">RNA-binding</keyword>
<keyword id="KW-0819">tRNA processing</keyword>
<organism>
    <name type="scientific">Staphylococcus aureus (strain MW2)</name>
    <dbReference type="NCBI Taxonomy" id="196620"/>
    <lineage>
        <taxon>Bacteria</taxon>
        <taxon>Bacillati</taxon>
        <taxon>Bacillota</taxon>
        <taxon>Bacilli</taxon>
        <taxon>Bacillales</taxon>
        <taxon>Staphylococcaceae</taxon>
        <taxon>Staphylococcus</taxon>
    </lineage>
</organism>
<dbReference type="EC" id="3.1.26.5" evidence="1"/>
<dbReference type="EMBL" id="BA000033">
    <property type="protein sequence ID" value="BAB96496.1"/>
    <property type="status" value="ALT_INIT"/>
    <property type="molecule type" value="Genomic_DNA"/>
</dbReference>
<dbReference type="RefSeq" id="WP_001789343.1">
    <property type="nucleotide sequence ID" value="NC_003923.1"/>
</dbReference>
<dbReference type="SMR" id="P0A0H4"/>
<dbReference type="KEGG" id="sam:MW2631"/>
<dbReference type="HOGENOM" id="CLU_117179_9_1_9"/>
<dbReference type="GO" id="GO:0030677">
    <property type="term" value="C:ribonuclease P complex"/>
    <property type="evidence" value="ECO:0007669"/>
    <property type="project" value="TreeGrafter"/>
</dbReference>
<dbReference type="GO" id="GO:0042781">
    <property type="term" value="F:3'-tRNA processing endoribonuclease activity"/>
    <property type="evidence" value="ECO:0007669"/>
    <property type="project" value="TreeGrafter"/>
</dbReference>
<dbReference type="GO" id="GO:0004526">
    <property type="term" value="F:ribonuclease P activity"/>
    <property type="evidence" value="ECO:0007669"/>
    <property type="project" value="UniProtKB-UniRule"/>
</dbReference>
<dbReference type="GO" id="GO:0000049">
    <property type="term" value="F:tRNA binding"/>
    <property type="evidence" value="ECO:0007669"/>
    <property type="project" value="UniProtKB-UniRule"/>
</dbReference>
<dbReference type="GO" id="GO:0001682">
    <property type="term" value="P:tRNA 5'-leader removal"/>
    <property type="evidence" value="ECO:0007669"/>
    <property type="project" value="UniProtKB-UniRule"/>
</dbReference>
<dbReference type="FunFam" id="3.30.230.10:FF:000021">
    <property type="entry name" value="Ribonuclease P protein component"/>
    <property type="match status" value="1"/>
</dbReference>
<dbReference type="Gene3D" id="3.30.230.10">
    <property type="match status" value="1"/>
</dbReference>
<dbReference type="HAMAP" id="MF_00227">
    <property type="entry name" value="RNase_P"/>
    <property type="match status" value="1"/>
</dbReference>
<dbReference type="InterPro" id="IPR020568">
    <property type="entry name" value="Ribosomal_Su5_D2-typ_SF"/>
</dbReference>
<dbReference type="InterPro" id="IPR014721">
    <property type="entry name" value="Ribsml_uS5_D2-typ_fold_subgr"/>
</dbReference>
<dbReference type="InterPro" id="IPR000100">
    <property type="entry name" value="RNase_P"/>
</dbReference>
<dbReference type="InterPro" id="IPR020539">
    <property type="entry name" value="RNase_P_CS"/>
</dbReference>
<dbReference type="NCBIfam" id="TIGR00188">
    <property type="entry name" value="rnpA"/>
    <property type="match status" value="1"/>
</dbReference>
<dbReference type="PANTHER" id="PTHR33992">
    <property type="entry name" value="RIBONUCLEASE P PROTEIN COMPONENT"/>
    <property type="match status" value="1"/>
</dbReference>
<dbReference type="PANTHER" id="PTHR33992:SF1">
    <property type="entry name" value="RIBONUCLEASE P PROTEIN COMPONENT"/>
    <property type="match status" value="1"/>
</dbReference>
<dbReference type="Pfam" id="PF00825">
    <property type="entry name" value="Ribonuclease_P"/>
    <property type="match status" value="1"/>
</dbReference>
<dbReference type="SUPFAM" id="SSF54211">
    <property type="entry name" value="Ribosomal protein S5 domain 2-like"/>
    <property type="match status" value="1"/>
</dbReference>
<dbReference type="PROSITE" id="PS00648">
    <property type="entry name" value="RIBONUCLEASE_P"/>
    <property type="match status" value="1"/>
</dbReference>
<gene>
    <name evidence="1" type="primary">rnpA</name>
    <name type="ordered locus">MW2631</name>
</gene>
<protein>
    <recommendedName>
        <fullName evidence="1">Ribonuclease P protein component</fullName>
        <shortName evidence="1">RNase P protein</shortName>
        <shortName evidence="1">RNaseP protein</shortName>
        <ecNumber evidence="1">3.1.26.5</ecNumber>
    </recommendedName>
    <alternativeName>
        <fullName evidence="1">Protein C5</fullName>
    </alternativeName>
</protein>
<sequence length="117" mass="13652">MLLEKAYRIKKNADFQRIYKKGHSVANRQFVVYTCNNKEIDHFRLGISVSKKLGNAVLRNKIKRAIRENFKVHKSHILAKDIIVIARQPAKDMTTLQIQNSLEHVLKIAKVFNKKIK</sequence>
<comment type="function">
    <text evidence="1">RNaseP catalyzes the removal of the 5'-leader sequence from pre-tRNA to produce the mature 5'-terminus. It can also cleave other RNA substrates such as 4.5S RNA. The protein component plays an auxiliary but essential role in vivo by binding to the 5'-leader sequence and broadening the substrate specificity of the ribozyme.</text>
</comment>
<comment type="catalytic activity">
    <reaction evidence="1">
        <text>Endonucleolytic cleavage of RNA, removing 5'-extranucleotides from tRNA precursor.</text>
        <dbReference type="EC" id="3.1.26.5"/>
    </reaction>
</comment>
<comment type="subunit">
    <text evidence="1">Consists of a catalytic RNA component (M1 or rnpB) and a protein subunit.</text>
</comment>
<comment type="similarity">
    <text evidence="1">Belongs to the RnpA family.</text>
</comment>
<comment type="sequence caution" evidence="2">
    <conflict type="erroneous initiation">
        <sequence resource="EMBL-CDS" id="BAB96496"/>
    </conflict>
</comment>
<reference key="1">
    <citation type="journal article" date="2002" name="Lancet">
        <title>Genome and virulence determinants of high virulence community-acquired MRSA.</title>
        <authorList>
            <person name="Baba T."/>
            <person name="Takeuchi F."/>
            <person name="Kuroda M."/>
            <person name="Yuzawa H."/>
            <person name="Aoki K."/>
            <person name="Oguchi A."/>
            <person name="Nagai Y."/>
            <person name="Iwama N."/>
            <person name="Asano K."/>
            <person name="Naimi T."/>
            <person name="Kuroda H."/>
            <person name="Cui L."/>
            <person name="Yamamoto K."/>
            <person name="Hiramatsu K."/>
        </authorList>
    </citation>
    <scope>NUCLEOTIDE SEQUENCE [LARGE SCALE GENOMIC DNA]</scope>
    <source>
        <strain>MW2</strain>
    </source>
</reference>
<name>RNPA_STAAW</name>
<proteinExistence type="inferred from homology"/>
<accession>P0A0H4</accession>
<accession>P58031</accession>
<accession>Q9LAH9</accession>